<reference key="1">
    <citation type="journal article" date="2011" name="Proc. Natl. Acad. Sci. U.S.A.">
        <title>Genomic anatomy of Escherichia coli O157:H7 outbreaks.</title>
        <authorList>
            <person name="Eppinger M."/>
            <person name="Mammel M.K."/>
            <person name="Leclerc J.E."/>
            <person name="Ravel J."/>
            <person name="Cebula T.A."/>
        </authorList>
    </citation>
    <scope>NUCLEOTIDE SEQUENCE [LARGE SCALE GENOMIC DNA]</scope>
    <source>
        <strain>EC4115 / EHEC</strain>
    </source>
</reference>
<sequence>MARYLGPKLKLSRREGTDLFLKSGVRAIDTKCKIEQAPGQHGARKPRLSDYGVQLREKQKVRRIYGVLERQFRNYYKEAARLKGNTGENLLALLEGRLDNVVYRMGFGATRAEARQLVSHKAIMVNGRVVNIASYQVSPNDVVSIREKAKKQSRVKAALELAEQREKPTWLEVDAGKMEGTFKRKPERSDLSADINEHLIVELYSK</sequence>
<proteinExistence type="inferred from homology"/>
<comment type="function">
    <text evidence="1">One of the primary rRNA binding proteins, it binds directly to 16S rRNA where it nucleates assembly of the body of the 30S subunit.</text>
</comment>
<comment type="function">
    <text evidence="1">With S5 and S12 plays an important role in translational accuracy.</text>
</comment>
<comment type="subunit">
    <text evidence="1">Part of the 30S ribosomal subunit. Contacts protein S5. The interaction surface between S4 and S5 is involved in control of translational fidelity.</text>
</comment>
<comment type="similarity">
    <text evidence="1">Belongs to the universal ribosomal protein uS4 family.</text>
</comment>
<feature type="chain" id="PRO_1000140725" description="Small ribosomal subunit protein uS4">
    <location>
        <begin position="1"/>
        <end position="206"/>
    </location>
</feature>
<feature type="domain" description="S4 RNA-binding" evidence="1">
    <location>
        <begin position="96"/>
        <end position="156"/>
    </location>
</feature>
<protein>
    <recommendedName>
        <fullName evidence="1">Small ribosomal subunit protein uS4</fullName>
    </recommendedName>
    <alternativeName>
        <fullName evidence="2">30S ribosomal protein S4</fullName>
    </alternativeName>
</protein>
<gene>
    <name evidence="1" type="primary">rpsD</name>
    <name type="ordered locus">ECH74115_4618</name>
</gene>
<dbReference type="EMBL" id="CP001164">
    <property type="protein sequence ID" value="ACI35133.1"/>
    <property type="molecule type" value="Genomic_DNA"/>
</dbReference>
<dbReference type="RefSeq" id="WP_000135224.1">
    <property type="nucleotide sequence ID" value="NC_011353.1"/>
</dbReference>
<dbReference type="SMR" id="B5YT15"/>
<dbReference type="GeneID" id="93778691"/>
<dbReference type="KEGG" id="ecf:ECH74115_4618"/>
<dbReference type="HOGENOM" id="CLU_092403_0_2_6"/>
<dbReference type="GO" id="GO:0015935">
    <property type="term" value="C:small ribosomal subunit"/>
    <property type="evidence" value="ECO:0007669"/>
    <property type="project" value="InterPro"/>
</dbReference>
<dbReference type="GO" id="GO:0019843">
    <property type="term" value="F:rRNA binding"/>
    <property type="evidence" value="ECO:0007669"/>
    <property type="project" value="UniProtKB-UniRule"/>
</dbReference>
<dbReference type="GO" id="GO:0003735">
    <property type="term" value="F:structural constituent of ribosome"/>
    <property type="evidence" value="ECO:0007669"/>
    <property type="project" value="InterPro"/>
</dbReference>
<dbReference type="GO" id="GO:0042274">
    <property type="term" value="P:ribosomal small subunit biogenesis"/>
    <property type="evidence" value="ECO:0007669"/>
    <property type="project" value="TreeGrafter"/>
</dbReference>
<dbReference type="GO" id="GO:0006412">
    <property type="term" value="P:translation"/>
    <property type="evidence" value="ECO:0007669"/>
    <property type="project" value="UniProtKB-UniRule"/>
</dbReference>
<dbReference type="CDD" id="cd00165">
    <property type="entry name" value="S4"/>
    <property type="match status" value="1"/>
</dbReference>
<dbReference type="FunFam" id="1.10.1050.10:FF:000001">
    <property type="entry name" value="30S ribosomal protein S4"/>
    <property type="match status" value="1"/>
</dbReference>
<dbReference type="FunFam" id="3.10.290.10:FF:000001">
    <property type="entry name" value="30S ribosomal protein S4"/>
    <property type="match status" value="1"/>
</dbReference>
<dbReference type="Gene3D" id="1.10.1050.10">
    <property type="entry name" value="Ribosomal Protein S4 Delta 41, Chain A, domain 1"/>
    <property type="match status" value="1"/>
</dbReference>
<dbReference type="Gene3D" id="3.10.290.10">
    <property type="entry name" value="RNA-binding S4 domain"/>
    <property type="match status" value="1"/>
</dbReference>
<dbReference type="HAMAP" id="MF_01306_B">
    <property type="entry name" value="Ribosomal_uS4_B"/>
    <property type="match status" value="1"/>
</dbReference>
<dbReference type="InterPro" id="IPR022801">
    <property type="entry name" value="Ribosomal_uS4"/>
</dbReference>
<dbReference type="InterPro" id="IPR005709">
    <property type="entry name" value="Ribosomal_uS4_bac-type"/>
</dbReference>
<dbReference type="InterPro" id="IPR018079">
    <property type="entry name" value="Ribosomal_uS4_CS"/>
</dbReference>
<dbReference type="InterPro" id="IPR001912">
    <property type="entry name" value="Ribosomal_uS4_N"/>
</dbReference>
<dbReference type="InterPro" id="IPR002942">
    <property type="entry name" value="S4_RNA-bd"/>
</dbReference>
<dbReference type="InterPro" id="IPR036986">
    <property type="entry name" value="S4_RNA-bd_sf"/>
</dbReference>
<dbReference type="NCBIfam" id="NF003717">
    <property type="entry name" value="PRK05327.1"/>
    <property type="match status" value="1"/>
</dbReference>
<dbReference type="NCBIfam" id="TIGR01017">
    <property type="entry name" value="rpsD_bact"/>
    <property type="match status" value="1"/>
</dbReference>
<dbReference type="PANTHER" id="PTHR11831">
    <property type="entry name" value="30S 40S RIBOSOMAL PROTEIN"/>
    <property type="match status" value="1"/>
</dbReference>
<dbReference type="PANTHER" id="PTHR11831:SF4">
    <property type="entry name" value="SMALL RIBOSOMAL SUBUNIT PROTEIN US4M"/>
    <property type="match status" value="1"/>
</dbReference>
<dbReference type="Pfam" id="PF00163">
    <property type="entry name" value="Ribosomal_S4"/>
    <property type="match status" value="1"/>
</dbReference>
<dbReference type="Pfam" id="PF01479">
    <property type="entry name" value="S4"/>
    <property type="match status" value="1"/>
</dbReference>
<dbReference type="SMART" id="SM01390">
    <property type="entry name" value="Ribosomal_S4"/>
    <property type="match status" value="1"/>
</dbReference>
<dbReference type="SMART" id="SM00363">
    <property type="entry name" value="S4"/>
    <property type="match status" value="1"/>
</dbReference>
<dbReference type="SUPFAM" id="SSF55174">
    <property type="entry name" value="Alpha-L RNA-binding motif"/>
    <property type="match status" value="1"/>
</dbReference>
<dbReference type="PROSITE" id="PS00632">
    <property type="entry name" value="RIBOSOMAL_S4"/>
    <property type="match status" value="1"/>
</dbReference>
<dbReference type="PROSITE" id="PS50889">
    <property type="entry name" value="S4"/>
    <property type="match status" value="1"/>
</dbReference>
<evidence type="ECO:0000255" key="1">
    <source>
        <dbReference type="HAMAP-Rule" id="MF_01306"/>
    </source>
</evidence>
<evidence type="ECO:0000305" key="2"/>
<accession>B5YT15</accession>
<organism>
    <name type="scientific">Escherichia coli O157:H7 (strain EC4115 / EHEC)</name>
    <dbReference type="NCBI Taxonomy" id="444450"/>
    <lineage>
        <taxon>Bacteria</taxon>
        <taxon>Pseudomonadati</taxon>
        <taxon>Pseudomonadota</taxon>
        <taxon>Gammaproteobacteria</taxon>
        <taxon>Enterobacterales</taxon>
        <taxon>Enterobacteriaceae</taxon>
        <taxon>Escherichia</taxon>
    </lineage>
</organism>
<name>RS4_ECO5E</name>
<keyword id="KW-0687">Ribonucleoprotein</keyword>
<keyword id="KW-0689">Ribosomal protein</keyword>
<keyword id="KW-0694">RNA-binding</keyword>
<keyword id="KW-0699">rRNA-binding</keyword>